<comment type="subcellular location">
    <subcellularLocation>
        <location evidence="2">Host membrane</location>
        <topology evidence="2">Multi-pass membrane protein</topology>
    </subcellularLocation>
</comment>
<proteinExistence type="predicted"/>
<keyword id="KW-1043">Host membrane</keyword>
<keyword id="KW-0472">Membrane</keyword>
<keyword id="KW-1185">Reference proteome</keyword>
<keyword id="KW-0812">Transmembrane</keyword>
<keyword id="KW-1133">Transmembrane helix</keyword>
<reference key="1">
    <citation type="journal article" date="2006" name="Virology">
        <title>His1 and His2 are distantly related, spindle-shaped haloviruses belonging to the novel virus group, Salterprovirus.</title>
        <authorList>
            <person name="Bath C."/>
            <person name="Cukalac T."/>
            <person name="Porter K."/>
            <person name="Dyall-Smith M.L."/>
        </authorList>
    </citation>
    <scope>NUCLEOTIDE SEQUENCE [GENOMIC DNA]</scope>
</reference>
<feature type="chain" id="PRO_0000384892" description="Putative transmembrane protein ORF24">
    <location>
        <begin position="1"/>
        <end position="88"/>
    </location>
</feature>
<feature type="transmembrane region" description="Helical" evidence="1">
    <location>
        <begin position="16"/>
        <end position="36"/>
    </location>
</feature>
<feature type="transmembrane region" description="Helical" evidence="1">
    <location>
        <begin position="42"/>
        <end position="62"/>
    </location>
</feature>
<feature type="transmembrane region" description="Helical" evidence="1">
    <location>
        <begin position="64"/>
        <end position="84"/>
    </location>
</feature>
<accession>Q25BH1</accession>
<gene>
    <name type="ORF">ORF24</name>
</gene>
<sequence>MMLQTAFTDLANPSYLNMGLALLLATIMVMILWAGMRLKSPAVFVIWALTSITLIFTFVTQFSFIWFWVMVMLSLLLISIVASIRYTL</sequence>
<name>Y024_HIS1I</name>
<organismHost>
    <name type="scientific">Haloarcula hispanica</name>
    <dbReference type="NCBI Taxonomy" id="51589"/>
</organismHost>
<organism>
    <name type="scientific">His1 virus (isolate Australia/Victoria)</name>
    <name type="common">His1V</name>
    <name type="synonym">Haloarcula hispanica virus 1</name>
    <dbReference type="NCBI Taxonomy" id="654912"/>
    <lineage>
        <taxon>Viruses</taxon>
        <taxon>Viruses incertae sedis</taxon>
        <taxon>Halspiviridae</taxon>
        <taxon>Salterprovirus</taxon>
        <taxon>Salterprovirus His1</taxon>
    </lineage>
</organism>
<evidence type="ECO:0000255" key="1"/>
<evidence type="ECO:0000305" key="2"/>
<dbReference type="EMBL" id="AF191796">
    <property type="protein sequence ID" value="AAQ13740.1"/>
    <property type="molecule type" value="Genomic_DNA"/>
</dbReference>
<dbReference type="RefSeq" id="YP_529536.1">
    <property type="nucleotide sequence ID" value="NC_007914.1"/>
</dbReference>
<dbReference type="SMR" id="Q25BH1"/>
<dbReference type="KEGG" id="vg:5142415"/>
<dbReference type="Proteomes" id="UP000007024">
    <property type="component" value="Segment"/>
</dbReference>
<dbReference type="GO" id="GO:0033644">
    <property type="term" value="C:host cell membrane"/>
    <property type="evidence" value="ECO:0007669"/>
    <property type="project" value="UniProtKB-SubCell"/>
</dbReference>
<dbReference type="GO" id="GO:0016020">
    <property type="term" value="C:membrane"/>
    <property type="evidence" value="ECO:0007669"/>
    <property type="project" value="UniProtKB-KW"/>
</dbReference>
<protein>
    <recommendedName>
        <fullName>Putative transmembrane protein ORF24</fullName>
    </recommendedName>
</protein>